<evidence type="ECO:0000250" key="1">
    <source>
        <dbReference type="UniProtKB" id="A0A109PTH9"/>
    </source>
</evidence>
<evidence type="ECO:0000255" key="2"/>
<evidence type="ECO:0000269" key="3">
    <source>
    </source>
</evidence>
<evidence type="ECO:0000305" key="4"/>
<feature type="signal peptide" evidence="2">
    <location>
        <begin position="1"/>
        <end position="21"/>
    </location>
</feature>
<feature type="chain" id="PRO_0000448322" description="Ulvan lyase, long isoform" evidence="2">
    <location>
        <begin position="22"/>
        <end position="999"/>
    </location>
</feature>
<feature type="active site" description="Proton donor/acceptor" evidence="1">
    <location>
        <position position="127"/>
    </location>
</feature>
<feature type="binding site" evidence="1">
    <location>
        <begin position="126"/>
        <end position="127"/>
    </location>
    <ligand>
        <name>substrate</name>
    </ligand>
</feature>
<feature type="binding site" evidence="1">
    <location>
        <position position="189"/>
    </location>
    <ligand>
        <name>Ca(2+)</name>
        <dbReference type="ChEBI" id="CHEBI:29108"/>
        <label>1</label>
        <note>structural</note>
    </ligand>
</feature>
<feature type="binding site" evidence="1">
    <location>
        <position position="199"/>
    </location>
    <ligand>
        <name>Ca(2+)</name>
        <dbReference type="ChEBI" id="CHEBI:29108"/>
        <label>1</label>
        <note>structural</note>
    </ligand>
</feature>
<feature type="binding site" evidence="1">
    <location>
        <position position="201"/>
    </location>
    <ligand>
        <name>Ca(2+)</name>
        <dbReference type="ChEBI" id="CHEBI:29108"/>
        <label>1</label>
        <note>structural</note>
    </ligand>
</feature>
<feature type="binding site" evidence="1">
    <location>
        <position position="280"/>
    </location>
    <ligand>
        <name>substrate</name>
    </ligand>
</feature>
<feature type="binding site" evidence="1">
    <location>
        <position position="297"/>
    </location>
    <ligand>
        <name>substrate</name>
    </ligand>
</feature>
<feature type="binding site" evidence="1">
    <location>
        <position position="300"/>
    </location>
    <ligand>
        <name>Ca(2+)</name>
        <dbReference type="ChEBI" id="CHEBI:29108"/>
        <label>2</label>
        <note>structural</note>
    </ligand>
</feature>
<feature type="binding site" evidence="1">
    <location>
        <position position="303"/>
    </location>
    <ligand>
        <name>Ca(2+)</name>
        <dbReference type="ChEBI" id="CHEBI:29108"/>
        <label>2</label>
        <note>structural</note>
    </ligand>
</feature>
<feature type="binding site" evidence="1">
    <location>
        <position position="305"/>
    </location>
    <ligand>
        <name>Ca(2+)</name>
        <dbReference type="ChEBI" id="CHEBI:29108"/>
        <label>2</label>
        <note>structural</note>
    </ligand>
</feature>
<feature type="binding site" evidence="1">
    <location>
        <position position="361"/>
    </location>
    <ligand>
        <name>substrate</name>
    </ligand>
</feature>
<feature type="site" description="Neutralizes the sugar carboxylate group at subsite +1" evidence="1">
    <location>
        <position position="236"/>
    </location>
</feature>
<keyword id="KW-0106">Calcium</keyword>
<keyword id="KW-0456">Lyase</keyword>
<keyword id="KW-0479">Metal-binding</keyword>
<keyword id="KW-0732">Signal</keyword>
<name>UL24L_ALTSL</name>
<proteinExistence type="evidence at protein level"/>
<gene>
    <name type="ORF">LOR_61</name>
</gene>
<organism>
    <name type="scientific">Alteromonas sp. (strain LOR)</name>
    <dbReference type="NCBI Taxonomy" id="1537994"/>
    <lineage>
        <taxon>Bacteria</taxon>
        <taxon>Pseudomonadati</taxon>
        <taxon>Pseudomonadota</taxon>
        <taxon>Gammaproteobacteria</taxon>
        <taxon>Alteromonadales</taxon>
        <taxon>Alteromonadaceae</taxon>
        <taxon>Alteromonas/Salinimonas group</taxon>
        <taxon>Alteromonas</taxon>
    </lineage>
</organism>
<protein>
    <recommendedName>
        <fullName>Ulvan lyase, long isoform</fullName>
        <ecNumber evidence="3">4.2.2.-</ecNumber>
    </recommendedName>
</protein>
<sequence>MKCLKTLLVSTTLLTAFSLNAEVTLEQQVKITEEGLHFDGRNLDFSNVGTPDTGEKYDYFFGPNISAHGDAVKTYRHYVFMTWYKGGKNERNVMLSRYNTLNGELSTIEFPHKHTGFRGDPLVGESHNTIGLSVSPINGTIHMVFDMHAYDNNNHGGKFKDDFFRYSFSVAGAAELPHSEFTLDKFVKDTSEVSQGDDDYKHLTMTGDLDDKGNFARLTYPKFFTTVDGTLLLYMRLGGNNNGAYVFNRYDAETESWSTFTKFNENNQKLKGNQYNWGLYGNMKYVNGKLRVGFQQRSNDNSDKYKYQNGVYYAYSDHPDGFGDWKNHKGEPMTWPLINSDEIKVFEPGDYISHTEANSVYIVGSFDWTVTEKGDIHIISKVRSTDRGRADYEEVYIHSYKPAGAEEFIISTDFPGASEIYTSGDNVYIVGLEGGRPYVEKAQGGTNNFIRVYEASDGPVFDHGTLYIKDGKVYYYLMERTSGTAMPLYLQIIDLDLESDANAPIVSFPSPSVTVNQGYEKLSLNISAESPVEGRSIQSVSLYIDDELVRTDDSLPFLFGHGSKPHETGALGWLDRHEPNPSPLSAGRHVFKAVAVDSEGDSSTATMILNVNSNAPIVSFPQESLEVDEGFERLSLNISAESAVEGRTIESVSLYIDGGLVRTDTSLPYLFGHASKPHETGAMGWLDTHSPNPSPLAAGSYEFTAVATDNEGEETTASMLLVVKGEPEPPIVTWPNSTVTVYEGYEKLAITIDAETPVEGRDIQSVTLFRNGELVRVDTRPVWNFGHSFAPYEFGAMGWLDRHEPNPSPLGVGTHTFTAVARDSAGLESETDMALIVLSLPGPSVMINEGDISLLTEYQNLAITAEASAADDDISLVSLALYIDEQLIREIYEPPFIWGSDAYSTELLSLTEGTHLVRVVATDSNNKQSESSIFINIDLLGDLNKDSIVDKADTRLFTSKLRAGEIMDIRYDFNGDGVVNNRDTRGLVRRCTYSRCSSN</sequence>
<accession>P9WF07</accession>
<dbReference type="EC" id="4.2.2.-" evidence="3"/>
<dbReference type="RefSeq" id="WP_032096165.1">
    <property type="nucleotide sequence ID" value="NZ_JQFW01000010.1"/>
</dbReference>
<dbReference type="SMR" id="P9WF07"/>
<dbReference type="OrthoDB" id="315328at2"/>
<dbReference type="GO" id="GO:0016829">
    <property type="term" value="F:lyase activity"/>
    <property type="evidence" value="ECO:0007669"/>
    <property type="project" value="UniProtKB-KW"/>
</dbReference>
<dbReference type="GO" id="GO:0046872">
    <property type="term" value="F:metal ion binding"/>
    <property type="evidence" value="ECO:0007669"/>
    <property type="project" value="UniProtKB-KW"/>
</dbReference>
<dbReference type="GO" id="GO:0000272">
    <property type="term" value="P:polysaccharide catabolic process"/>
    <property type="evidence" value="ECO:0007669"/>
    <property type="project" value="InterPro"/>
</dbReference>
<dbReference type="Gene3D" id="1.10.1330.10">
    <property type="entry name" value="Dockerin domain"/>
    <property type="match status" value="1"/>
</dbReference>
<dbReference type="Gene3D" id="2.60.40.10">
    <property type="entry name" value="Immunoglobulins"/>
    <property type="match status" value="4"/>
</dbReference>
<dbReference type="InterPro" id="IPR036439">
    <property type="entry name" value="Dockerin_dom_sf"/>
</dbReference>
<dbReference type="InterPro" id="IPR013783">
    <property type="entry name" value="Ig-like_fold"/>
</dbReference>
<dbReference type="Pfam" id="PF15892">
    <property type="entry name" value="BNR_4"/>
    <property type="match status" value="1"/>
</dbReference>
<dbReference type="SUPFAM" id="SSF63446">
    <property type="entry name" value="Type I dockerin domain"/>
    <property type="match status" value="1"/>
</dbReference>
<reference key="1">
    <citation type="journal article" date="2014" name="Genome Announc.">
        <title>Draft genome sequences of two ulvan-degrading isolates, strains LTR and LOR, that belong to the Alteromonas genus.</title>
        <authorList>
            <person name="Kopel M."/>
            <person name="Helbert W."/>
            <person name="Henrissat B."/>
            <person name="Doniger T."/>
            <person name="Banin E."/>
        </authorList>
    </citation>
    <scope>NUCLEOTIDE SEQUENCE [LARGE SCALE GENOMIC DNA]</scope>
    <source>
        <strain>LOR</strain>
    </source>
</reference>
<reference key="2">
    <citation type="journal article" date="2016" name="J. Biol. Chem.">
        <title>New family of ulvan lyases identified in three isolates from the Alteromonadales order.</title>
        <authorList>
            <person name="Kopel M."/>
            <person name="Helbert W."/>
            <person name="Belnik Y."/>
            <person name="Buravenkov V."/>
            <person name="Herman A."/>
            <person name="Banin E."/>
        </authorList>
    </citation>
    <scope>FUNCTION</scope>
    <scope>CATALYTIC ACTIVITY</scope>
</reference>
<comment type="function">
    <text evidence="3">Ulvan lyase involved in ulvan degradation. Ulvan is the main polysaccharide component of the Ulvales (green seaweed) cell wall. It is composed of disaccharide building blocks comprising 3-sulfated rhamnose (Rha3S) linked to D-glucuronic acid (GlcA), L-iduronic acid (IduA), or D-xylose (Xyl). Ulvan lyase catalyzes preferentially the endolytic cleavage of the glycosidic bond between Rha3S and the uronic acid GlcA, but not IduA, producing oligosaccharides that have unsaturated 4-deoxy-L-threo-hex-4-enopyranosiduronic acid (deltaUA) at the non-reducing end. The most abundant end products in the degradation of the ulvan polysaccharide were deltaUA-Rha3S disaccharides and deltaUA-Rha3S-IduA-Rha3S and deltaUA-Rha3S-Xyl-Rha3S tetrasaccharides.</text>
</comment>
<comment type="similarity">
    <text evidence="4">Belongs to the polysaccharide lyase 24 family.</text>
</comment>